<sequence>MLRFAPSPTGDMHIGNLRVAIFNYIVSKQRKEDLVIRIEDTDKDRNIEGKDKEILDILNLFGIDYSVVMYQSENFRFHRAMALQLLQDKRAFNCFCSSDWLDKKREEAKNSKTAYRYDDACASLPDELVIDNEHPFTVRIRKPLEPIIIKDHIKGEIKFEPNDIDSFIIMRQDKTPMYNFACAVDDMLSDISLVIRGEDHVSNTPKQILIREALGYSKNIEYAHLPIILNDDGKKMSKRDDASSVKWLLEEGYLPSAIANYLILIGNKPPKEIFTIQEAIEWFSLENISKSPARFDINMLKHVNKEHLKILDAKELSRYVGFADAQIGEVAKIYLEEASTTKELRAKIALIFAEKNIPDEFKEYAQTIVKIIQKAPYFEEYEDFKNYIIQESGLKGKNFFKPLRILLMGSEHGPDIATVYKHIKNYLGEIVK</sequence>
<gene>
    <name evidence="1" type="primary">gltX2</name>
    <name type="ordered locus">Suden_1059</name>
</gene>
<proteinExistence type="inferred from homology"/>
<keyword id="KW-0030">Aminoacyl-tRNA synthetase</keyword>
<keyword id="KW-0067">ATP-binding</keyword>
<keyword id="KW-0963">Cytoplasm</keyword>
<keyword id="KW-0436">Ligase</keyword>
<keyword id="KW-0547">Nucleotide-binding</keyword>
<keyword id="KW-0648">Protein biosynthesis</keyword>
<keyword id="KW-1185">Reference proteome</keyword>
<feature type="chain" id="PRO_0000367777" description="Glutamate--tRNA ligase 2">
    <location>
        <begin position="1"/>
        <end position="432"/>
    </location>
</feature>
<feature type="short sequence motif" description="'HIGH' region" evidence="1">
    <location>
        <begin position="6"/>
        <end position="16"/>
    </location>
</feature>
<feature type="short sequence motif" description="'KMSKS' region" evidence="1">
    <location>
        <begin position="235"/>
        <end position="239"/>
    </location>
</feature>
<feature type="binding site" evidence="1">
    <location>
        <position position="238"/>
    </location>
    <ligand>
        <name>ATP</name>
        <dbReference type="ChEBI" id="CHEBI:30616"/>
    </ligand>
</feature>
<accession>Q30RP4</accession>
<protein>
    <recommendedName>
        <fullName evidence="1">Glutamate--tRNA ligase 2</fullName>
        <ecNumber evidence="1">6.1.1.17</ecNumber>
    </recommendedName>
    <alternativeName>
        <fullName evidence="1">Glutamyl-tRNA synthetase 2</fullName>
        <shortName evidence="1">GluRS 2</shortName>
    </alternativeName>
</protein>
<organism>
    <name type="scientific">Sulfurimonas denitrificans (strain ATCC 33889 / DSM 1251)</name>
    <name type="common">Thiomicrospira denitrificans (strain ATCC 33889 / DSM 1251)</name>
    <dbReference type="NCBI Taxonomy" id="326298"/>
    <lineage>
        <taxon>Bacteria</taxon>
        <taxon>Pseudomonadati</taxon>
        <taxon>Campylobacterota</taxon>
        <taxon>Epsilonproteobacteria</taxon>
        <taxon>Campylobacterales</taxon>
        <taxon>Sulfurimonadaceae</taxon>
        <taxon>Sulfurimonas</taxon>
    </lineage>
</organism>
<dbReference type="EC" id="6.1.1.17" evidence="1"/>
<dbReference type="EMBL" id="CP000153">
    <property type="protein sequence ID" value="ABB44337.1"/>
    <property type="molecule type" value="Genomic_DNA"/>
</dbReference>
<dbReference type="RefSeq" id="WP_011372689.1">
    <property type="nucleotide sequence ID" value="NC_007575.1"/>
</dbReference>
<dbReference type="SMR" id="Q30RP4"/>
<dbReference type="STRING" id="326298.Suden_1059"/>
<dbReference type="KEGG" id="tdn:Suden_1059"/>
<dbReference type="eggNOG" id="COG0008">
    <property type="taxonomic scope" value="Bacteria"/>
</dbReference>
<dbReference type="HOGENOM" id="CLU_015768_6_0_7"/>
<dbReference type="OrthoDB" id="9807503at2"/>
<dbReference type="Proteomes" id="UP000002714">
    <property type="component" value="Chromosome"/>
</dbReference>
<dbReference type="GO" id="GO:0005829">
    <property type="term" value="C:cytosol"/>
    <property type="evidence" value="ECO:0007669"/>
    <property type="project" value="TreeGrafter"/>
</dbReference>
<dbReference type="GO" id="GO:0005524">
    <property type="term" value="F:ATP binding"/>
    <property type="evidence" value="ECO:0007669"/>
    <property type="project" value="UniProtKB-UniRule"/>
</dbReference>
<dbReference type="GO" id="GO:0004818">
    <property type="term" value="F:glutamate-tRNA ligase activity"/>
    <property type="evidence" value="ECO:0007669"/>
    <property type="project" value="UniProtKB-UniRule"/>
</dbReference>
<dbReference type="GO" id="GO:0000049">
    <property type="term" value="F:tRNA binding"/>
    <property type="evidence" value="ECO:0007669"/>
    <property type="project" value="InterPro"/>
</dbReference>
<dbReference type="GO" id="GO:0006424">
    <property type="term" value="P:glutamyl-tRNA aminoacylation"/>
    <property type="evidence" value="ECO:0007669"/>
    <property type="project" value="UniProtKB-UniRule"/>
</dbReference>
<dbReference type="Gene3D" id="1.10.10.350">
    <property type="match status" value="1"/>
</dbReference>
<dbReference type="Gene3D" id="3.40.50.620">
    <property type="entry name" value="HUPs"/>
    <property type="match status" value="1"/>
</dbReference>
<dbReference type="HAMAP" id="MF_00022">
    <property type="entry name" value="Glu_tRNA_synth_type1"/>
    <property type="match status" value="1"/>
</dbReference>
<dbReference type="InterPro" id="IPR045462">
    <property type="entry name" value="aa-tRNA-synth_I_cd-bd"/>
</dbReference>
<dbReference type="InterPro" id="IPR020751">
    <property type="entry name" value="aa-tRNA-synth_I_codon-bd_sub2"/>
</dbReference>
<dbReference type="InterPro" id="IPR001412">
    <property type="entry name" value="aa-tRNA-synth_I_CS"/>
</dbReference>
<dbReference type="InterPro" id="IPR008925">
    <property type="entry name" value="aa_tRNA-synth_I_cd-bd_sf"/>
</dbReference>
<dbReference type="InterPro" id="IPR004527">
    <property type="entry name" value="Glu-tRNA-ligase_bac/mito"/>
</dbReference>
<dbReference type="InterPro" id="IPR000924">
    <property type="entry name" value="Glu/Gln-tRNA-synth"/>
</dbReference>
<dbReference type="InterPro" id="IPR020058">
    <property type="entry name" value="Glu/Gln-tRNA-synth_Ib_cat-dom"/>
</dbReference>
<dbReference type="InterPro" id="IPR049940">
    <property type="entry name" value="GluQ/Sye"/>
</dbReference>
<dbReference type="InterPro" id="IPR014729">
    <property type="entry name" value="Rossmann-like_a/b/a_fold"/>
</dbReference>
<dbReference type="NCBIfam" id="TIGR00464">
    <property type="entry name" value="gltX_bact"/>
    <property type="match status" value="1"/>
</dbReference>
<dbReference type="PANTHER" id="PTHR43311">
    <property type="entry name" value="GLUTAMATE--TRNA LIGASE"/>
    <property type="match status" value="1"/>
</dbReference>
<dbReference type="PANTHER" id="PTHR43311:SF2">
    <property type="entry name" value="GLUTAMATE--TRNA LIGASE, MITOCHONDRIAL-RELATED"/>
    <property type="match status" value="1"/>
</dbReference>
<dbReference type="Pfam" id="PF19269">
    <property type="entry name" value="Anticodon_2"/>
    <property type="match status" value="1"/>
</dbReference>
<dbReference type="Pfam" id="PF00749">
    <property type="entry name" value="tRNA-synt_1c"/>
    <property type="match status" value="1"/>
</dbReference>
<dbReference type="PRINTS" id="PR00987">
    <property type="entry name" value="TRNASYNTHGLU"/>
</dbReference>
<dbReference type="SUPFAM" id="SSF48163">
    <property type="entry name" value="An anticodon-binding domain of class I aminoacyl-tRNA synthetases"/>
    <property type="match status" value="1"/>
</dbReference>
<dbReference type="SUPFAM" id="SSF52374">
    <property type="entry name" value="Nucleotidylyl transferase"/>
    <property type="match status" value="1"/>
</dbReference>
<dbReference type="PROSITE" id="PS00178">
    <property type="entry name" value="AA_TRNA_LIGASE_I"/>
    <property type="match status" value="1"/>
</dbReference>
<name>SYE2_SULDN</name>
<evidence type="ECO:0000255" key="1">
    <source>
        <dbReference type="HAMAP-Rule" id="MF_00022"/>
    </source>
</evidence>
<comment type="function">
    <text evidence="1">Catalyzes the attachment of glutamate to tRNA(Glu) in a two-step reaction: glutamate is first activated by ATP to form Glu-AMP and then transferred to the acceptor end of tRNA(Glu).</text>
</comment>
<comment type="catalytic activity">
    <reaction evidence="1">
        <text>tRNA(Glu) + L-glutamate + ATP = L-glutamyl-tRNA(Glu) + AMP + diphosphate</text>
        <dbReference type="Rhea" id="RHEA:23540"/>
        <dbReference type="Rhea" id="RHEA-COMP:9663"/>
        <dbReference type="Rhea" id="RHEA-COMP:9680"/>
        <dbReference type="ChEBI" id="CHEBI:29985"/>
        <dbReference type="ChEBI" id="CHEBI:30616"/>
        <dbReference type="ChEBI" id="CHEBI:33019"/>
        <dbReference type="ChEBI" id="CHEBI:78442"/>
        <dbReference type="ChEBI" id="CHEBI:78520"/>
        <dbReference type="ChEBI" id="CHEBI:456215"/>
        <dbReference type="EC" id="6.1.1.17"/>
    </reaction>
</comment>
<comment type="subunit">
    <text evidence="1">Monomer.</text>
</comment>
<comment type="subcellular location">
    <subcellularLocation>
        <location evidence="1">Cytoplasm</location>
    </subcellularLocation>
</comment>
<comment type="similarity">
    <text evidence="1">Belongs to the class-I aminoacyl-tRNA synthetase family. Glutamate--tRNA ligase type 1 subfamily.</text>
</comment>
<reference key="1">
    <citation type="journal article" date="2008" name="Appl. Environ. Microbiol.">
        <title>Genome of the epsilonproteobacterial chemolithoautotroph Sulfurimonas denitrificans.</title>
        <authorList>
            <person name="Sievert S.M."/>
            <person name="Scott K.M."/>
            <person name="Klotz M.G."/>
            <person name="Chain P.S.G."/>
            <person name="Hauser L.J."/>
            <person name="Hemp J."/>
            <person name="Huegler M."/>
            <person name="Land M."/>
            <person name="Lapidus A."/>
            <person name="Larimer F.W."/>
            <person name="Lucas S."/>
            <person name="Malfatti S.A."/>
            <person name="Meyer F."/>
            <person name="Paulsen I.T."/>
            <person name="Ren Q."/>
            <person name="Simon J."/>
            <person name="Bailey K."/>
            <person name="Diaz E."/>
            <person name="Fitzpatrick K.A."/>
            <person name="Glover B."/>
            <person name="Gwatney N."/>
            <person name="Korajkic A."/>
            <person name="Long A."/>
            <person name="Mobberley J.M."/>
            <person name="Pantry S.N."/>
            <person name="Pazder G."/>
            <person name="Peterson S."/>
            <person name="Quintanilla J.D."/>
            <person name="Sprinkle R."/>
            <person name="Stephens J."/>
            <person name="Thomas P."/>
            <person name="Vaughn R."/>
            <person name="Weber M.J."/>
            <person name="Wooten L.L."/>
        </authorList>
    </citation>
    <scope>NUCLEOTIDE SEQUENCE [LARGE SCALE GENOMIC DNA]</scope>
    <source>
        <strain>ATCC 33889 / DSM 1251</strain>
    </source>
</reference>